<sequence length="126" mass="12911">MAVSKNEILETISNMTVMEVVELIEAMEEKFNVSAAAAAVAVAAPAAGAGAAAAEEQTEFTVVMTSFGSNKVNVIKAIRGITGLGLKEAKDLVEGAPSTVKEGVSKDEAASIKKELEEAGATVEVK</sequence>
<feature type="chain" id="PRO_1000007033" description="Large ribosomal subunit protein bL12">
    <location>
        <begin position="1"/>
        <end position="126"/>
    </location>
</feature>
<evidence type="ECO:0000255" key="1">
    <source>
        <dbReference type="HAMAP-Rule" id="MF_00368"/>
    </source>
</evidence>
<evidence type="ECO:0000305" key="2"/>
<accession>A5IHS2</accession>
<proteinExistence type="inferred from homology"/>
<name>RL7_LEGPC</name>
<comment type="function">
    <text evidence="1">Forms part of the ribosomal stalk which helps the ribosome interact with GTP-bound translation factors. Is thus essential for accurate translation.</text>
</comment>
<comment type="subunit">
    <text evidence="1">Homodimer. Part of the ribosomal stalk of the 50S ribosomal subunit. Forms a multimeric L10(L12)X complex, where L10 forms an elongated spine to which 2 to 4 L12 dimers bind in a sequential fashion. Binds GTP-bound translation factors.</text>
</comment>
<comment type="similarity">
    <text evidence="1">Belongs to the bacterial ribosomal protein bL12 family.</text>
</comment>
<dbReference type="EMBL" id="CP000675">
    <property type="protein sequence ID" value="ABQ56922.1"/>
    <property type="molecule type" value="Genomic_DNA"/>
</dbReference>
<dbReference type="RefSeq" id="WP_010946072.1">
    <property type="nucleotide sequence ID" value="NZ_JAPMSS010000006.1"/>
</dbReference>
<dbReference type="SMR" id="A5IHS2"/>
<dbReference type="GeneID" id="57034324"/>
<dbReference type="KEGG" id="lpc:LPC_3022"/>
<dbReference type="HOGENOM" id="CLU_086499_3_2_6"/>
<dbReference type="GO" id="GO:0022625">
    <property type="term" value="C:cytosolic large ribosomal subunit"/>
    <property type="evidence" value="ECO:0007669"/>
    <property type="project" value="TreeGrafter"/>
</dbReference>
<dbReference type="GO" id="GO:0003729">
    <property type="term" value="F:mRNA binding"/>
    <property type="evidence" value="ECO:0007669"/>
    <property type="project" value="TreeGrafter"/>
</dbReference>
<dbReference type="GO" id="GO:0003735">
    <property type="term" value="F:structural constituent of ribosome"/>
    <property type="evidence" value="ECO:0007669"/>
    <property type="project" value="InterPro"/>
</dbReference>
<dbReference type="GO" id="GO:0006412">
    <property type="term" value="P:translation"/>
    <property type="evidence" value="ECO:0007669"/>
    <property type="project" value="UniProtKB-UniRule"/>
</dbReference>
<dbReference type="CDD" id="cd00387">
    <property type="entry name" value="Ribosomal_L7_L12"/>
    <property type="match status" value="1"/>
</dbReference>
<dbReference type="FunFam" id="3.30.1390.10:FF:000001">
    <property type="entry name" value="50S ribosomal protein L7/L12"/>
    <property type="match status" value="1"/>
</dbReference>
<dbReference type="Gene3D" id="3.30.1390.10">
    <property type="match status" value="1"/>
</dbReference>
<dbReference type="Gene3D" id="1.20.5.710">
    <property type="entry name" value="Single helix bin"/>
    <property type="match status" value="1"/>
</dbReference>
<dbReference type="HAMAP" id="MF_00368">
    <property type="entry name" value="Ribosomal_bL12"/>
    <property type="match status" value="1"/>
</dbReference>
<dbReference type="InterPro" id="IPR000206">
    <property type="entry name" value="Ribosomal_bL12"/>
</dbReference>
<dbReference type="InterPro" id="IPR013823">
    <property type="entry name" value="Ribosomal_bL12_C"/>
</dbReference>
<dbReference type="InterPro" id="IPR014719">
    <property type="entry name" value="Ribosomal_bL12_C/ClpS-like"/>
</dbReference>
<dbReference type="InterPro" id="IPR008932">
    <property type="entry name" value="Ribosomal_bL12_oligo"/>
</dbReference>
<dbReference type="InterPro" id="IPR036235">
    <property type="entry name" value="Ribosomal_bL12_oligo_N_sf"/>
</dbReference>
<dbReference type="NCBIfam" id="TIGR00855">
    <property type="entry name" value="L12"/>
    <property type="match status" value="1"/>
</dbReference>
<dbReference type="PANTHER" id="PTHR45987">
    <property type="entry name" value="39S RIBOSOMAL PROTEIN L12"/>
    <property type="match status" value="1"/>
</dbReference>
<dbReference type="PANTHER" id="PTHR45987:SF4">
    <property type="entry name" value="LARGE RIBOSOMAL SUBUNIT PROTEIN BL12M"/>
    <property type="match status" value="1"/>
</dbReference>
<dbReference type="Pfam" id="PF00542">
    <property type="entry name" value="Ribosomal_L12"/>
    <property type="match status" value="1"/>
</dbReference>
<dbReference type="Pfam" id="PF16320">
    <property type="entry name" value="Ribosomal_L12_N"/>
    <property type="match status" value="1"/>
</dbReference>
<dbReference type="SUPFAM" id="SSF54736">
    <property type="entry name" value="ClpS-like"/>
    <property type="match status" value="1"/>
</dbReference>
<dbReference type="SUPFAM" id="SSF48300">
    <property type="entry name" value="Ribosomal protein L7/12, oligomerisation (N-terminal) domain"/>
    <property type="match status" value="1"/>
</dbReference>
<gene>
    <name evidence="1" type="primary">rplL</name>
    <name type="ordered locus">LPC_3022</name>
</gene>
<reference key="1">
    <citation type="submission" date="2006-11" db="EMBL/GenBank/DDBJ databases">
        <title>Identification and characterization of a new conjugation/ type IVA secretion system (trb/tra) of L. pneumophila Corby localized on a mobile genomic island.</title>
        <authorList>
            <person name="Gloeckner G."/>
            <person name="Albert-Weissenberger C."/>
            <person name="Weinmann E."/>
            <person name="Jacobi S."/>
            <person name="Schunder E."/>
            <person name="Steinert M."/>
            <person name="Buchrieser C."/>
            <person name="Hacker J."/>
            <person name="Heuner K."/>
        </authorList>
    </citation>
    <scope>NUCLEOTIDE SEQUENCE [LARGE SCALE GENOMIC DNA]</scope>
    <source>
        <strain>Corby</strain>
    </source>
</reference>
<keyword id="KW-0687">Ribonucleoprotein</keyword>
<keyword id="KW-0689">Ribosomal protein</keyword>
<organism>
    <name type="scientific">Legionella pneumophila (strain Corby)</name>
    <dbReference type="NCBI Taxonomy" id="400673"/>
    <lineage>
        <taxon>Bacteria</taxon>
        <taxon>Pseudomonadati</taxon>
        <taxon>Pseudomonadota</taxon>
        <taxon>Gammaproteobacteria</taxon>
        <taxon>Legionellales</taxon>
        <taxon>Legionellaceae</taxon>
        <taxon>Legionella</taxon>
    </lineage>
</organism>
<protein>
    <recommendedName>
        <fullName evidence="1">Large ribosomal subunit protein bL12</fullName>
    </recommendedName>
    <alternativeName>
        <fullName evidence="2">50S ribosomal protein L7/L12</fullName>
    </alternativeName>
</protein>